<comment type="function">
    <text evidence="1">One of several proteins that assist in the late maturation steps of the functional core of the 30S ribosomal subunit. Helps release RbfA from mature subunits. May play a role in the assembly of ribosomal proteins into the subunit. Circularly permuted GTPase that catalyzes slow GTP hydrolysis, GTPase activity is stimulated by the 30S ribosomal subunit.</text>
</comment>
<comment type="cofactor">
    <cofactor evidence="1">
        <name>Zn(2+)</name>
        <dbReference type="ChEBI" id="CHEBI:29105"/>
    </cofactor>
    <text evidence="1">Binds 1 zinc ion per subunit.</text>
</comment>
<comment type="subunit">
    <text evidence="1">Monomer. Associates with 30S ribosomal subunit, binds 16S rRNA.</text>
</comment>
<comment type="subcellular location">
    <subcellularLocation>
        <location evidence="1">Cytoplasm</location>
    </subcellularLocation>
</comment>
<comment type="similarity">
    <text evidence="1">Belongs to the TRAFAC class YlqF/YawG GTPase family. RsgA subfamily.</text>
</comment>
<comment type="sequence caution" evidence="3">
    <conflict type="erroneous initiation">
        <sequence resource="EMBL-CDS" id="AAO04493"/>
    </conflict>
    <text>Extended N-terminus.</text>
</comment>
<accession>Q8CSV8</accession>
<sequence>MKTGRIVKLISGVYQVDVEGERFDTKPRGLFRKKKFSPVVGDIVDFEVQNTKEGYIHHVHDRNNELKRPPVSNIDELVIVMSAVEPEFSTQLLDRYLVIAHSYHLKPRILITKHDLASEQEILKIKDTIKIYQKIGYATQFIGKDSNYTATVDEWSDGLIVLSGQSGVGKSTFLNSYQPQLKLETNDISKSLNRGKHTTRHVELYDRKGGYIADTPGFSALDFNHIEKEQLKDFFIDIHEAGEQCKFRNCNHIKEPQCHVKALVEKGEIPQFRYDHYQQLYNEISNRKVRY</sequence>
<proteinExistence type="inferred from homology"/>
<feature type="chain" id="PRO_0000171519" description="Small ribosomal subunit biogenesis GTPase RsgA">
    <location>
        <begin position="1"/>
        <end position="291"/>
    </location>
</feature>
<feature type="domain" description="CP-type G" evidence="2">
    <location>
        <begin position="63"/>
        <end position="221"/>
    </location>
</feature>
<feature type="binding site" evidence="1">
    <location>
        <begin position="112"/>
        <end position="115"/>
    </location>
    <ligand>
        <name>GTP</name>
        <dbReference type="ChEBI" id="CHEBI:37565"/>
    </ligand>
</feature>
<feature type="binding site" evidence="1">
    <location>
        <begin position="164"/>
        <end position="172"/>
    </location>
    <ligand>
        <name>GTP</name>
        <dbReference type="ChEBI" id="CHEBI:37565"/>
    </ligand>
</feature>
<feature type="binding site" evidence="1">
    <location>
        <position position="245"/>
    </location>
    <ligand>
        <name>Zn(2+)</name>
        <dbReference type="ChEBI" id="CHEBI:29105"/>
    </ligand>
</feature>
<feature type="binding site" evidence="1">
    <location>
        <position position="250"/>
    </location>
    <ligand>
        <name>Zn(2+)</name>
        <dbReference type="ChEBI" id="CHEBI:29105"/>
    </ligand>
</feature>
<feature type="binding site" evidence="1">
    <location>
        <position position="252"/>
    </location>
    <ligand>
        <name>Zn(2+)</name>
        <dbReference type="ChEBI" id="CHEBI:29105"/>
    </ligand>
</feature>
<feature type="binding site" evidence="1">
    <location>
        <position position="258"/>
    </location>
    <ligand>
        <name>Zn(2+)</name>
        <dbReference type="ChEBI" id="CHEBI:29105"/>
    </ligand>
</feature>
<evidence type="ECO:0000255" key="1">
    <source>
        <dbReference type="HAMAP-Rule" id="MF_01820"/>
    </source>
</evidence>
<evidence type="ECO:0000255" key="2">
    <source>
        <dbReference type="PROSITE-ProRule" id="PRU01058"/>
    </source>
</evidence>
<evidence type="ECO:0000305" key="3"/>
<name>RSGA_STAES</name>
<protein>
    <recommendedName>
        <fullName evidence="1">Small ribosomal subunit biogenesis GTPase RsgA</fullName>
        <ecNumber evidence="1">3.6.1.-</ecNumber>
    </recommendedName>
</protein>
<organism>
    <name type="scientific">Staphylococcus epidermidis (strain ATCC 12228 / FDA PCI 1200)</name>
    <dbReference type="NCBI Taxonomy" id="176280"/>
    <lineage>
        <taxon>Bacteria</taxon>
        <taxon>Bacillati</taxon>
        <taxon>Bacillota</taxon>
        <taxon>Bacilli</taxon>
        <taxon>Bacillales</taxon>
        <taxon>Staphylococcaceae</taxon>
        <taxon>Staphylococcus</taxon>
    </lineage>
</organism>
<dbReference type="EC" id="3.6.1.-" evidence="1"/>
<dbReference type="EMBL" id="AE015929">
    <property type="protein sequence ID" value="AAO04493.1"/>
    <property type="status" value="ALT_INIT"/>
    <property type="molecule type" value="Genomic_DNA"/>
</dbReference>
<dbReference type="RefSeq" id="NP_764451.1">
    <property type="nucleotide sequence ID" value="NC_004461.1"/>
</dbReference>
<dbReference type="RefSeq" id="WP_001830137.1">
    <property type="nucleotide sequence ID" value="NZ_WBME01000001.1"/>
</dbReference>
<dbReference type="SMR" id="Q8CSV8"/>
<dbReference type="GeneID" id="50018966"/>
<dbReference type="KEGG" id="sep:SE_0896"/>
<dbReference type="PATRIC" id="fig|176280.10.peg.869"/>
<dbReference type="eggNOG" id="COG1162">
    <property type="taxonomic scope" value="Bacteria"/>
</dbReference>
<dbReference type="HOGENOM" id="CLU_033617_2_1_9"/>
<dbReference type="OrthoDB" id="9809485at2"/>
<dbReference type="Proteomes" id="UP000001411">
    <property type="component" value="Chromosome"/>
</dbReference>
<dbReference type="GO" id="GO:0005737">
    <property type="term" value="C:cytoplasm"/>
    <property type="evidence" value="ECO:0007669"/>
    <property type="project" value="UniProtKB-SubCell"/>
</dbReference>
<dbReference type="GO" id="GO:0005525">
    <property type="term" value="F:GTP binding"/>
    <property type="evidence" value="ECO:0007669"/>
    <property type="project" value="UniProtKB-UniRule"/>
</dbReference>
<dbReference type="GO" id="GO:0003924">
    <property type="term" value="F:GTPase activity"/>
    <property type="evidence" value="ECO:0007669"/>
    <property type="project" value="UniProtKB-UniRule"/>
</dbReference>
<dbReference type="GO" id="GO:0046872">
    <property type="term" value="F:metal ion binding"/>
    <property type="evidence" value="ECO:0007669"/>
    <property type="project" value="UniProtKB-KW"/>
</dbReference>
<dbReference type="GO" id="GO:0019843">
    <property type="term" value="F:rRNA binding"/>
    <property type="evidence" value="ECO:0007669"/>
    <property type="project" value="UniProtKB-KW"/>
</dbReference>
<dbReference type="GO" id="GO:0042274">
    <property type="term" value="P:ribosomal small subunit biogenesis"/>
    <property type="evidence" value="ECO:0007669"/>
    <property type="project" value="UniProtKB-UniRule"/>
</dbReference>
<dbReference type="CDD" id="cd04466">
    <property type="entry name" value="S1_YloQ_GTPase"/>
    <property type="match status" value="1"/>
</dbReference>
<dbReference type="CDD" id="cd01854">
    <property type="entry name" value="YjeQ_EngC"/>
    <property type="match status" value="1"/>
</dbReference>
<dbReference type="Gene3D" id="2.40.50.140">
    <property type="entry name" value="Nucleic acid-binding proteins"/>
    <property type="match status" value="1"/>
</dbReference>
<dbReference type="Gene3D" id="3.40.50.300">
    <property type="entry name" value="P-loop containing nucleotide triphosphate hydrolases"/>
    <property type="match status" value="1"/>
</dbReference>
<dbReference type="Gene3D" id="1.10.40.50">
    <property type="entry name" value="Probable gtpase engc, domain 3"/>
    <property type="match status" value="1"/>
</dbReference>
<dbReference type="HAMAP" id="MF_01820">
    <property type="entry name" value="GTPase_RsgA"/>
    <property type="match status" value="1"/>
</dbReference>
<dbReference type="InterPro" id="IPR030378">
    <property type="entry name" value="G_CP_dom"/>
</dbReference>
<dbReference type="InterPro" id="IPR012340">
    <property type="entry name" value="NA-bd_OB-fold"/>
</dbReference>
<dbReference type="InterPro" id="IPR027417">
    <property type="entry name" value="P-loop_NTPase"/>
</dbReference>
<dbReference type="InterPro" id="IPR004881">
    <property type="entry name" value="Ribosome_biogen_GTPase_RsgA"/>
</dbReference>
<dbReference type="InterPro" id="IPR010914">
    <property type="entry name" value="RsgA_GTPase_dom"/>
</dbReference>
<dbReference type="InterPro" id="IPR031944">
    <property type="entry name" value="RsgA_N"/>
</dbReference>
<dbReference type="NCBIfam" id="TIGR00157">
    <property type="entry name" value="ribosome small subunit-dependent GTPase A"/>
    <property type="match status" value="1"/>
</dbReference>
<dbReference type="PANTHER" id="PTHR32120">
    <property type="entry name" value="SMALL RIBOSOMAL SUBUNIT BIOGENESIS GTPASE RSGA"/>
    <property type="match status" value="1"/>
</dbReference>
<dbReference type="PANTHER" id="PTHR32120:SF11">
    <property type="entry name" value="SMALL RIBOSOMAL SUBUNIT BIOGENESIS GTPASE RSGA 1, MITOCHONDRIAL-RELATED"/>
    <property type="match status" value="1"/>
</dbReference>
<dbReference type="Pfam" id="PF03193">
    <property type="entry name" value="RsgA_GTPase"/>
    <property type="match status" value="1"/>
</dbReference>
<dbReference type="Pfam" id="PF16745">
    <property type="entry name" value="RsgA_N"/>
    <property type="match status" value="1"/>
</dbReference>
<dbReference type="SUPFAM" id="SSF50249">
    <property type="entry name" value="Nucleic acid-binding proteins"/>
    <property type="match status" value="1"/>
</dbReference>
<dbReference type="SUPFAM" id="SSF52540">
    <property type="entry name" value="P-loop containing nucleoside triphosphate hydrolases"/>
    <property type="match status" value="1"/>
</dbReference>
<dbReference type="PROSITE" id="PS50936">
    <property type="entry name" value="ENGC_GTPASE"/>
    <property type="match status" value="1"/>
</dbReference>
<dbReference type="PROSITE" id="PS51721">
    <property type="entry name" value="G_CP"/>
    <property type="match status" value="1"/>
</dbReference>
<gene>
    <name evidence="1" type="primary">rsgA</name>
    <name type="ordered locus">SE_0896</name>
</gene>
<keyword id="KW-0963">Cytoplasm</keyword>
<keyword id="KW-0342">GTP-binding</keyword>
<keyword id="KW-0378">Hydrolase</keyword>
<keyword id="KW-0479">Metal-binding</keyword>
<keyword id="KW-0547">Nucleotide-binding</keyword>
<keyword id="KW-0690">Ribosome biogenesis</keyword>
<keyword id="KW-0694">RNA-binding</keyword>
<keyword id="KW-0699">rRNA-binding</keyword>
<keyword id="KW-0862">Zinc</keyword>
<reference key="1">
    <citation type="journal article" date="2003" name="Mol. Microbiol.">
        <title>Genome-based analysis of virulence genes in a non-biofilm-forming Staphylococcus epidermidis strain (ATCC 12228).</title>
        <authorList>
            <person name="Zhang Y.-Q."/>
            <person name="Ren S.-X."/>
            <person name="Li H.-L."/>
            <person name="Wang Y.-X."/>
            <person name="Fu G."/>
            <person name="Yang J."/>
            <person name="Qin Z.-Q."/>
            <person name="Miao Y.-G."/>
            <person name="Wang W.-Y."/>
            <person name="Chen R.-S."/>
            <person name="Shen Y."/>
            <person name="Chen Z."/>
            <person name="Yuan Z.-H."/>
            <person name="Zhao G.-P."/>
            <person name="Qu D."/>
            <person name="Danchin A."/>
            <person name="Wen Y.-M."/>
        </authorList>
    </citation>
    <scope>NUCLEOTIDE SEQUENCE [LARGE SCALE GENOMIC DNA]</scope>
    <source>
        <strain>ATCC 12228 / FDA PCI 1200</strain>
    </source>
</reference>